<keyword id="KW-0012">Acyltransferase</keyword>
<keyword id="KW-0963">Cytoplasm</keyword>
<keyword id="KW-0808">Transferase</keyword>
<evidence type="ECO:0000255" key="1">
    <source>
        <dbReference type="HAMAP-Rule" id="MF_00689"/>
    </source>
</evidence>
<organism>
    <name type="scientific">Brucella melitensis biotype 2 (strain ATCC 23457)</name>
    <dbReference type="NCBI Taxonomy" id="546272"/>
    <lineage>
        <taxon>Bacteria</taxon>
        <taxon>Pseudomonadati</taxon>
        <taxon>Pseudomonadota</taxon>
        <taxon>Alphaproteobacteria</taxon>
        <taxon>Hyphomicrobiales</taxon>
        <taxon>Brucellaceae</taxon>
        <taxon>Brucella/Ochrobactrum group</taxon>
        <taxon>Brucella</taxon>
    </lineage>
</organism>
<protein>
    <recommendedName>
        <fullName evidence="1">Aspartate/glutamate leucyltransferase</fullName>
        <ecNumber evidence="1">2.3.2.29</ecNumber>
    </recommendedName>
</protein>
<dbReference type="EC" id="2.3.2.29" evidence="1"/>
<dbReference type="EMBL" id="CP001488">
    <property type="protein sequence ID" value="ACO00551.1"/>
    <property type="molecule type" value="Genomic_DNA"/>
</dbReference>
<dbReference type="RefSeq" id="WP_004686496.1">
    <property type="nucleotide sequence ID" value="NC_012441.1"/>
</dbReference>
<dbReference type="SMR" id="C0RI93"/>
<dbReference type="KEGG" id="bmi:BMEA_A0795"/>
<dbReference type="HOGENOM" id="CLU_077607_1_0_5"/>
<dbReference type="Proteomes" id="UP000001748">
    <property type="component" value="Chromosome I"/>
</dbReference>
<dbReference type="GO" id="GO:0005737">
    <property type="term" value="C:cytoplasm"/>
    <property type="evidence" value="ECO:0007669"/>
    <property type="project" value="UniProtKB-SubCell"/>
</dbReference>
<dbReference type="GO" id="GO:0004057">
    <property type="term" value="F:arginyl-tRNA--protein transferase activity"/>
    <property type="evidence" value="ECO:0007669"/>
    <property type="project" value="InterPro"/>
</dbReference>
<dbReference type="GO" id="GO:0008914">
    <property type="term" value="F:leucyl-tRNA--protein transferase activity"/>
    <property type="evidence" value="ECO:0007669"/>
    <property type="project" value="UniProtKB-UniRule"/>
</dbReference>
<dbReference type="GO" id="GO:0071596">
    <property type="term" value="P:ubiquitin-dependent protein catabolic process via the N-end rule pathway"/>
    <property type="evidence" value="ECO:0007669"/>
    <property type="project" value="InterPro"/>
</dbReference>
<dbReference type="HAMAP" id="MF_00689">
    <property type="entry name" value="Bpt"/>
    <property type="match status" value="1"/>
</dbReference>
<dbReference type="InterPro" id="IPR016181">
    <property type="entry name" value="Acyl_CoA_acyltransferase"/>
</dbReference>
<dbReference type="InterPro" id="IPR017138">
    <property type="entry name" value="Asp_Glu_LeuTrfase"/>
</dbReference>
<dbReference type="InterPro" id="IPR030700">
    <property type="entry name" value="N-end_Aminoacyl_Trfase"/>
</dbReference>
<dbReference type="InterPro" id="IPR007472">
    <property type="entry name" value="N-end_Aminoacyl_Trfase_C"/>
</dbReference>
<dbReference type="InterPro" id="IPR007471">
    <property type="entry name" value="N-end_Aminoacyl_Trfase_N"/>
</dbReference>
<dbReference type="NCBIfam" id="NF002341">
    <property type="entry name" value="PRK01305.1-1"/>
    <property type="match status" value="1"/>
</dbReference>
<dbReference type="NCBIfam" id="NF002343">
    <property type="entry name" value="PRK01305.1-4"/>
    <property type="match status" value="1"/>
</dbReference>
<dbReference type="NCBIfam" id="NF002346">
    <property type="entry name" value="PRK01305.2-3"/>
    <property type="match status" value="1"/>
</dbReference>
<dbReference type="PANTHER" id="PTHR21367">
    <property type="entry name" value="ARGININE-TRNA-PROTEIN TRANSFERASE 1"/>
    <property type="match status" value="1"/>
</dbReference>
<dbReference type="PANTHER" id="PTHR21367:SF1">
    <property type="entry name" value="ARGINYL-TRNA--PROTEIN TRANSFERASE 1"/>
    <property type="match status" value="1"/>
</dbReference>
<dbReference type="Pfam" id="PF04377">
    <property type="entry name" value="ATE_C"/>
    <property type="match status" value="1"/>
</dbReference>
<dbReference type="Pfam" id="PF04376">
    <property type="entry name" value="ATE_N"/>
    <property type="match status" value="1"/>
</dbReference>
<dbReference type="PIRSF" id="PIRSF037208">
    <property type="entry name" value="ATE_pro_prd"/>
    <property type="match status" value="1"/>
</dbReference>
<dbReference type="SUPFAM" id="SSF55729">
    <property type="entry name" value="Acyl-CoA N-acyltransferases (Nat)"/>
    <property type="match status" value="1"/>
</dbReference>
<accession>C0RI93</accession>
<comment type="function">
    <text evidence="1">Functions in the N-end rule pathway of protein degradation where it conjugates Leu from its aminoacyl-tRNA to the N-termini of proteins containing an N-terminal aspartate or glutamate.</text>
</comment>
<comment type="catalytic activity">
    <reaction evidence="1">
        <text>N-terminal L-glutamyl-[protein] + L-leucyl-tRNA(Leu) = N-terminal L-leucyl-L-glutamyl-[protein] + tRNA(Leu) + H(+)</text>
        <dbReference type="Rhea" id="RHEA:50412"/>
        <dbReference type="Rhea" id="RHEA-COMP:9613"/>
        <dbReference type="Rhea" id="RHEA-COMP:9622"/>
        <dbReference type="Rhea" id="RHEA-COMP:12664"/>
        <dbReference type="Rhea" id="RHEA-COMP:12668"/>
        <dbReference type="ChEBI" id="CHEBI:15378"/>
        <dbReference type="ChEBI" id="CHEBI:64721"/>
        <dbReference type="ChEBI" id="CHEBI:78442"/>
        <dbReference type="ChEBI" id="CHEBI:78494"/>
        <dbReference type="ChEBI" id="CHEBI:133041"/>
        <dbReference type="EC" id="2.3.2.29"/>
    </reaction>
</comment>
<comment type="catalytic activity">
    <reaction evidence="1">
        <text>N-terminal L-aspartyl-[protein] + L-leucyl-tRNA(Leu) = N-terminal L-leucyl-L-aspartyl-[protein] + tRNA(Leu) + H(+)</text>
        <dbReference type="Rhea" id="RHEA:50420"/>
        <dbReference type="Rhea" id="RHEA-COMP:9613"/>
        <dbReference type="Rhea" id="RHEA-COMP:9622"/>
        <dbReference type="Rhea" id="RHEA-COMP:12669"/>
        <dbReference type="Rhea" id="RHEA-COMP:12674"/>
        <dbReference type="ChEBI" id="CHEBI:15378"/>
        <dbReference type="ChEBI" id="CHEBI:64720"/>
        <dbReference type="ChEBI" id="CHEBI:78442"/>
        <dbReference type="ChEBI" id="CHEBI:78494"/>
        <dbReference type="ChEBI" id="CHEBI:133042"/>
        <dbReference type="EC" id="2.3.2.29"/>
    </reaction>
</comment>
<comment type="subcellular location">
    <subcellularLocation>
        <location evidence="1">Cytoplasm</location>
    </subcellularLocation>
</comment>
<comment type="similarity">
    <text evidence="1">Belongs to the R-transferase family. Bpt subfamily.</text>
</comment>
<proteinExistence type="inferred from homology"/>
<feature type="chain" id="PRO_1000147801" description="Aspartate/glutamate leucyltransferase">
    <location>
        <begin position="1"/>
        <end position="249"/>
    </location>
</feature>
<sequence length="249" mass="28705">MTHQPQQSPQFFLTAPSPCPYLEGQQERKVYTHLVGDKANEINDLLTQGGFRRSQNIAYRPACEVCRACISVRILAGEFEMTRNMRRVWSQNRDLIGRVHKAQPSTEQYALFRDYLDARHRSGGMSDMTVLDYAMMIEDTHVNTQIIEYRRRGPDSFMSAKGDGELIAVALTDVMADGLSMVYSFFSPHMQERSLGTYMILDHIERARAAGLPHVYLGYWVEGSRKMQYKIRFTPQEHLGPRGWQRFEG</sequence>
<reference key="1">
    <citation type="submission" date="2009-03" db="EMBL/GenBank/DDBJ databases">
        <title>Brucella melitensis ATCC 23457 whole genome shotgun sequencing project.</title>
        <authorList>
            <person name="Setubal J.C."/>
            <person name="Boyle S."/>
            <person name="Crasta O.R."/>
            <person name="Gillespie J.J."/>
            <person name="Kenyon R.W."/>
            <person name="Lu J."/>
            <person name="Mane S."/>
            <person name="Nagrani S."/>
            <person name="Shallom J.M."/>
            <person name="Shallom S."/>
            <person name="Shukla M."/>
            <person name="Snyder E.E."/>
            <person name="Sobral B.W."/>
            <person name="Wattam A.R."/>
            <person name="Will R."/>
            <person name="Williams K."/>
            <person name="Yoo H."/>
            <person name="Munk C."/>
            <person name="Tapia R."/>
            <person name="Han C."/>
            <person name="Detter J.C."/>
            <person name="Bruce D."/>
            <person name="Brettin T.S."/>
        </authorList>
    </citation>
    <scope>NUCLEOTIDE SEQUENCE [LARGE SCALE GENOMIC DNA]</scope>
    <source>
        <strain>ATCC 23457</strain>
    </source>
</reference>
<name>BPT_BRUMB</name>
<gene>
    <name evidence="1" type="primary">bpt</name>
    <name type="ordered locus">BMEA_A0795</name>
</gene>